<gene>
    <name evidence="1" type="primary">rsmG</name>
    <name type="ordered locus">BAB1_2061</name>
</gene>
<sequence>MSADIRFDSLKTIVPAVSRETADRLIAFEDLFRKWSKAINLASPSTLADLWNRHILDSAQLFPLAKEATRWLDIGSGGGFPGIVTACFLAERSGGCIDLVESAGKKAAFLRTAAGHLHVPARVHSARIESMWEKIETPQVVTARALASLGDLFTLAEPWLSDGAKALFQKGRDYQREIDESRVGWSFDLVKHPSAIDQASVILEISNLRRKTD</sequence>
<dbReference type="EC" id="2.1.1.170" evidence="1"/>
<dbReference type="EMBL" id="AM040264">
    <property type="protein sequence ID" value="CAJ12017.1"/>
    <property type="molecule type" value="Genomic_DNA"/>
</dbReference>
<dbReference type="RefSeq" id="WP_002967027.1">
    <property type="nucleotide sequence ID" value="NZ_KN046823.1"/>
</dbReference>
<dbReference type="SMR" id="Q2YR13"/>
<dbReference type="STRING" id="359391.BAB1_2061"/>
<dbReference type="GeneID" id="97534679"/>
<dbReference type="KEGG" id="bmf:BAB1_2061"/>
<dbReference type="PATRIC" id="fig|359391.11.peg.1293"/>
<dbReference type="HOGENOM" id="CLU_065341_1_1_5"/>
<dbReference type="PhylomeDB" id="Q2YR13"/>
<dbReference type="Proteomes" id="UP000002719">
    <property type="component" value="Chromosome I"/>
</dbReference>
<dbReference type="GO" id="GO:0005829">
    <property type="term" value="C:cytosol"/>
    <property type="evidence" value="ECO:0007669"/>
    <property type="project" value="TreeGrafter"/>
</dbReference>
<dbReference type="GO" id="GO:0070043">
    <property type="term" value="F:rRNA (guanine-N7-)-methyltransferase activity"/>
    <property type="evidence" value="ECO:0007669"/>
    <property type="project" value="UniProtKB-UniRule"/>
</dbReference>
<dbReference type="Gene3D" id="3.40.50.150">
    <property type="entry name" value="Vaccinia Virus protein VP39"/>
    <property type="match status" value="1"/>
</dbReference>
<dbReference type="HAMAP" id="MF_00074">
    <property type="entry name" value="16SrRNA_methyltr_G"/>
    <property type="match status" value="1"/>
</dbReference>
<dbReference type="InterPro" id="IPR003682">
    <property type="entry name" value="rRNA_ssu_MeTfrase_G"/>
</dbReference>
<dbReference type="InterPro" id="IPR029063">
    <property type="entry name" value="SAM-dependent_MTases_sf"/>
</dbReference>
<dbReference type="NCBIfam" id="TIGR00138">
    <property type="entry name" value="rsmG_gidB"/>
    <property type="match status" value="1"/>
</dbReference>
<dbReference type="PANTHER" id="PTHR31760">
    <property type="entry name" value="S-ADENOSYL-L-METHIONINE-DEPENDENT METHYLTRANSFERASES SUPERFAMILY PROTEIN"/>
    <property type="match status" value="1"/>
</dbReference>
<dbReference type="PANTHER" id="PTHR31760:SF0">
    <property type="entry name" value="S-ADENOSYL-L-METHIONINE-DEPENDENT METHYLTRANSFERASES SUPERFAMILY PROTEIN"/>
    <property type="match status" value="1"/>
</dbReference>
<dbReference type="Pfam" id="PF02527">
    <property type="entry name" value="GidB"/>
    <property type="match status" value="1"/>
</dbReference>
<dbReference type="PIRSF" id="PIRSF003078">
    <property type="entry name" value="GidB"/>
    <property type="match status" value="1"/>
</dbReference>
<dbReference type="SUPFAM" id="SSF53335">
    <property type="entry name" value="S-adenosyl-L-methionine-dependent methyltransferases"/>
    <property type="match status" value="1"/>
</dbReference>
<comment type="function">
    <text evidence="1">Specifically methylates the N7 position of guanine in position 527 of 16S rRNA.</text>
</comment>
<comment type="catalytic activity">
    <reaction evidence="1">
        <text>guanosine(527) in 16S rRNA + S-adenosyl-L-methionine = N(7)-methylguanosine(527) in 16S rRNA + S-adenosyl-L-homocysteine</text>
        <dbReference type="Rhea" id="RHEA:42732"/>
        <dbReference type="Rhea" id="RHEA-COMP:10209"/>
        <dbReference type="Rhea" id="RHEA-COMP:10210"/>
        <dbReference type="ChEBI" id="CHEBI:57856"/>
        <dbReference type="ChEBI" id="CHEBI:59789"/>
        <dbReference type="ChEBI" id="CHEBI:74269"/>
        <dbReference type="ChEBI" id="CHEBI:74480"/>
        <dbReference type="EC" id="2.1.1.170"/>
    </reaction>
</comment>
<comment type="subcellular location">
    <subcellularLocation>
        <location evidence="1">Cytoplasm</location>
    </subcellularLocation>
</comment>
<comment type="similarity">
    <text evidence="1">Belongs to the methyltransferase superfamily. RNA methyltransferase RsmG family.</text>
</comment>
<proteinExistence type="inferred from homology"/>
<evidence type="ECO:0000255" key="1">
    <source>
        <dbReference type="HAMAP-Rule" id="MF_00074"/>
    </source>
</evidence>
<protein>
    <recommendedName>
        <fullName evidence="1">Ribosomal RNA small subunit methyltransferase G</fullName>
        <ecNumber evidence="1">2.1.1.170</ecNumber>
    </recommendedName>
    <alternativeName>
        <fullName evidence="1">16S rRNA 7-methylguanosine methyltransferase</fullName>
        <shortName evidence="1">16S rRNA m7G methyltransferase</shortName>
    </alternativeName>
</protein>
<organism>
    <name type="scientific">Brucella abortus (strain 2308)</name>
    <dbReference type="NCBI Taxonomy" id="359391"/>
    <lineage>
        <taxon>Bacteria</taxon>
        <taxon>Pseudomonadati</taxon>
        <taxon>Pseudomonadota</taxon>
        <taxon>Alphaproteobacteria</taxon>
        <taxon>Hyphomicrobiales</taxon>
        <taxon>Brucellaceae</taxon>
        <taxon>Brucella/Ochrobactrum group</taxon>
        <taxon>Brucella</taxon>
    </lineage>
</organism>
<keyword id="KW-0963">Cytoplasm</keyword>
<keyword id="KW-0489">Methyltransferase</keyword>
<keyword id="KW-1185">Reference proteome</keyword>
<keyword id="KW-0698">rRNA processing</keyword>
<keyword id="KW-0949">S-adenosyl-L-methionine</keyword>
<keyword id="KW-0808">Transferase</keyword>
<reference key="1">
    <citation type="journal article" date="2005" name="Infect. Immun.">
        <title>Whole-genome analyses of speciation events in pathogenic Brucellae.</title>
        <authorList>
            <person name="Chain P.S."/>
            <person name="Comerci D.J."/>
            <person name="Tolmasky M.E."/>
            <person name="Larimer F.W."/>
            <person name="Malfatti S.A."/>
            <person name="Vergez L.M."/>
            <person name="Aguero F."/>
            <person name="Land M.L."/>
            <person name="Ugalde R.A."/>
            <person name="Garcia E."/>
        </authorList>
    </citation>
    <scope>NUCLEOTIDE SEQUENCE [LARGE SCALE GENOMIC DNA]</scope>
    <source>
        <strain>2308</strain>
    </source>
</reference>
<accession>Q2YR13</accession>
<name>RSMG_BRUA2</name>
<feature type="chain" id="PRO_1000010127" description="Ribosomal RNA small subunit methyltransferase G">
    <location>
        <begin position="1"/>
        <end position="213"/>
    </location>
</feature>
<feature type="binding site" evidence="1">
    <location>
        <position position="75"/>
    </location>
    <ligand>
        <name>S-adenosyl-L-methionine</name>
        <dbReference type="ChEBI" id="CHEBI:59789"/>
    </ligand>
</feature>
<feature type="binding site" evidence="1">
    <location>
        <position position="80"/>
    </location>
    <ligand>
        <name>S-adenosyl-L-methionine</name>
        <dbReference type="ChEBI" id="CHEBI:59789"/>
    </ligand>
</feature>
<feature type="binding site" evidence="1">
    <location>
        <begin position="128"/>
        <end position="129"/>
    </location>
    <ligand>
        <name>S-adenosyl-L-methionine</name>
        <dbReference type="ChEBI" id="CHEBI:59789"/>
    </ligand>
</feature>
<feature type="binding site" evidence="1">
    <location>
        <position position="144"/>
    </location>
    <ligand>
        <name>S-adenosyl-L-methionine</name>
        <dbReference type="ChEBI" id="CHEBI:59789"/>
    </ligand>
</feature>